<sequence length="197" mass="22216">MAKNGLVIYILVITLLLDQTSCHASKFKARKHSKRRVKEKDGDLKTQVEKLWREVNALKEMQALQTVCLRGTKFHKKCYLAAEGLKHFHEANEDCISKGGTLVVPRSADEINALRDYGKRSLPGVNDFWLGINDMVAEGKFVDINGLAISFLNWDQAQPNGGKRENCALFSQSAQGKWSDEACHSSKRYICEFTIPQ</sequence>
<proteinExistence type="evidence at transcript level"/>
<feature type="signal peptide" evidence="2">
    <location>
        <begin position="1"/>
        <end position="24"/>
    </location>
</feature>
<feature type="chain" id="PRO_0000017373" description="C-type lectin domain family 3 member A">
    <location>
        <begin position="25"/>
        <end position="197"/>
    </location>
</feature>
<feature type="domain" description="C-type lectin" evidence="3">
    <location>
        <begin position="74"/>
        <end position="192"/>
    </location>
</feature>
<feature type="disulfide bond" evidence="3">
    <location>
        <begin position="68"/>
        <end position="78"/>
    </location>
</feature>
<feature type="disulfide bond" evidence="3">
    <location>
        <begin position="95"/>
        <end position="191"/>
    </location>
</feature>
<feature type="disulfide bond" evidence="3">
    <location>
        <begin position="167"/>
        <end position="183"/>
    </location>
</feature>
<evidence type="ECO:0000250" key="1"/>
<evidence type="ECO:0000255" key="2"/>
<evidence type="ECO:0000255" key="3">
    <source>
        <dbReference type="PROSITE-ProRule" id="PRU00040"/>
    </source>
</evidence>
<accession>Q28008</accession>
<comment type="function">
    <text evidence="1">Promotes cell adhesion to laminin and fibronectin.</text>
</comment>
<comment type="subcellular location">
    <subcellularLocation>
        <location evidence="1">Secreted</location>
    </subcellularLocation>
</comment>
<reference key="1">
    <citation type="submission" date="1998-04" db="EMBL/GenBank/DDBJ databases">
        <title>C-type lectin homolog from bovine cartilage.</title>
        <authorList>
            <person name="Neame P.J."/>
            <person name="Boynton R.E."/>
        </authorList>
    </citation>
    <scope>NUCLEOTIDE SEQUENCE [MRNA]</scope>
    <source>
        <tissue>Cartilage</tissue>
    </source>
</reference>
<organism>
    <name type="scientific">Bos taurus</name>
    <name type="common">Bovine</name>
    <dbReference type="NCBI Taxonomy" id="9913"/>
    <lineage>
        <taxon>Eukaryota</taxon>
        <taxon>Metazoa</taxon>
        <taxon>Chordata</taxon>
        <taxon>Craniata</taxon>
        <taxon>Vertebrata</taxon>
        <taxon>Euteleostomi</taxon>
        <taxon>Mammalia</taxon>
        <taxon>Eutheria</taxon>
        <taxon>Laurasiatheria</taxon>
        <taxon>Artiodactyla</taxon>
        <taxon>Ruminantia</taxon>
        <taxon>Pecora</taxon>
        <taxon>Bovidae</taxon>
        <taxon>Bovinae</taxon>
        <taxon>Bos</taxon>
    </lineage>
</organism>
<protein>
    <recommendedName>
        <fullName>C-type lectin domain family 3 member A</fullName>
    </recommendedName>
    <alternativeName>
        <fullName>C-type lectin superfamily member 1</fullName>
    </alternativeName>
    <alternativeName>
        <fullName>Cartilage-derived C-type lectin</fullName>
    </alternativeName>
</protein>
<dbReference type="EMBL" id="U22298">
    <property type="protein sequence ID" value="AAC18614.1"/>
    <property type="molecule type" value="mRNA"/>
</dbReference>
<dbReference type="RefSeq" id="NP_777058.1">
    <property type="nucleotide sequence ID" value="NM_174633.2"/>
</dbReference>
<dbReference type="SMR" id="Q28008"/>
<dbReference type="FunCoup" id="Q28008">
    <property type="interactions" value="3"/>
</dbReference>
<dbReference type="STRING" id="9913.ENSBTAP00000054542"/>
<dbReference type="PaxDb" id="9913-ENSBTAP00000054542"/>
<dbReference type="Ensembl" id="ENSBTAT00000064491.2">
    <property type="protein sequence ID" value="ENSBTAP00000054542.1"/>
    <property type="gene ID" value="ENSBTAG00000046772.2"/>
</dbReference>
<dbReference type="GeneID" id="282415"/>
<dbReference type="KEGG" id="bta:282415"/>
<dbReference type="CTD" id="10143"/>
<dbReference type="VEuPathDB" id="HostDB:ENSBTAG00000046772"/>
<dbReference type="VGNC" id="VGNC:27428">
    <property type="gene designation" value="CLEC3A"/>
</dbReference>
<dbReference type="eggNOG" id="KOG4297">
    <property type="taxonomic scope" value="Eukaryota"/>
</dbReference>
<dbReference type="GeneTree" id="ENSGT00950000183186"/>
<dbReference type="HOGENOM" id="CLU_049894_6_0_1"/>
<dbReference type="InParanoid" id="Q28008"/>
<dbReference type="OMA" id="RYICEFL"/>
<dbReference type="OrthoDB" id="10032136at2759"/>
<dbReference type="TreeFam" id="TF330481"/>
<dbReference type="Proteomes" id="UP000009136">
    <property type="component" value="Chromosome 18"/>
</dbReference>
<dbReference type="Bgee" id="ENSBTAG00000046772">
    <property type="expression patterns" value="Expressed in laryngeal cartilage and 10 other cell types or tissues"/>
</dbReference>
<dbReference type="GO" id="GO:0005615">
    <property type="term" value="C:extracellular space"/>
    <property type="evidence" value="ECO:0000318"/>
    <property type="project" value="GO_Central"/>
</dbReference>
<dbReference type="GO" id="GO:0030246">
    <property type="term" value="F:carbohydrate binding"/>
    <property type="evidence" value="ECO:0007669"/>
    <property type="project" value="UniProtKB-KW"/>
</dbReference>
<dbReference type="GO" id="GO:0001503">
    <property type="term" value="P:ossification"/>
    <property type="evidence" value="ECO:0000318"/>
    <property type="project" value="GO_Central"/>
</dbReference>
<dbReference type="CDD" id="cd03596">
    <property type="entry name" value="CLECT_tetranectin_like"/>
    <property type="match status" value="1"/>
</dbReference>
<dbReference type="FunFam" id="3.10.100.10:FF:000010">
    <property type="entry name" value="C-type lectin domain family 3 member A"/>
    <property type="match status" value="1"/>
</dbReference>
<dbReference type="Gene3D" id="3.10.100.10">
    <property type="entry name" value="Mannose-Binding Protein A, subunit A"/>
    <property type="match status" value="1"/>
</dbReference>
<dbReference type="InterPro" id="IPR001304">
    <property type="entry name" value="C-type_lectin-like"/>
</dbReference>
<dbReference type="InterPro" id="IPR016186">
    <property type="entry name" value="C-type_lectin-like/link_sf"/>
</dbReference>
<dbReference type="InterPro" id="IPR018378">
    <property type="entry name" value="C-type_lectin_CS"/>
</dbReference>
<dbReference type="InterPro" id="IPR051663">
    <property type="entry name" value="CLec_Tetranectin-domain"/>
</dbReference>
<dbReference type="InterPro" id="IPR016187">
    <property type="entry name" value="CTDL_fold"/>
</dbReference>
<dbReference type="PANTHER" id="PTHR22799:SF2">
    <property type="entry name" value="C-TYPE LECTIN DOMAIN FAMILY 3 MEMBER A"/>
    <property type="match status" value="1"/>
</dbReference>
<dbReference type="PANTHER" id="PTHR22799">
    <property type="entry name" value="TETRANECTIN-RELATED"/>
    <property type="match status" value="1"/>
</dbReference>
<dbReference type="Pfam" id="PF00059">
    <property type="entry name" value="Lectin_C"/>
    <property type="match status" value="1"/>
</dbReference>
<dbReference type="SMART" id="SM00034">
    <property type="entry name" value="CLECT"/>
    <property type="match status" value="1"/>
</dbReference>
<dbReference type="SUPFAM" id="SSF56436">
    <property type="entry name" value="C-type lectin-like"/>
    <property type="match status" value="1"/>
</dbReference>
<dbReference type="PROSITE" id="PS00615">
    <property type="entry name" value="C_TYPE_LECTIN_1"/>
    <property type="match status" value="1"/>
</dbReference>
<dbReference type="PROSITE" id="PS50041">
    <property type="entry name" value="C_TYPE_LECTIN_2"/>
    <property type="match status" value="1"/>
</dbReference>
<name>CLC3A_BOVIN</name>
<keyword id="KW-1015">Disulfide bond</keyword>
<keyword id="KW-0430">Lectin</keyword>
<keyword id="KW-1185">Reference proteome</keyword>
<keyword id="KW-0964">Secreted</keyword>
<keyword id="KW-0732">Signal</keyword>
<gene>
    <name type="primary">CLEC3A</name>
    <name type="synonym">CLECSF1</name>
</gene>